<sequence length="539" mass="60476">MADTKYIFVTGGVVSSLGKGIVAASLGKLLQARGFNVALQKFDPYINIDPGTLNPYEHGECYVTEDGHEADLDLGHYERFLNTPTTRANNITTGRIYQNVIRKERKGEYLGKTVQVVPHITDEIKRNVKLLGQKSQYDFVITEIGGTVGDIESLPFLESVRQLKWELGQNCLCVHLTYVPYIAAAGEVKTKPTQHSVKQLQEVGIQPDILVLRTEHELQPDILKKVALFCNVAPDSVVQSVDVPTIYEVPLVLQQQHMDETVLRKVGLQVGPVPEMRQWHEFLEMKHTAQETVTIALVGKYVELQDAYKSIDESLMQAAIYNRKKLNLISVHSEKVTEANVAETLKDMDGIVIAPGFGSRGVEGKLVALKYARENDLPTLGICLGMQCMVIEYARNVLGFKDANTTEIESNIEHKVIDLMDEQKTVTDMGGSMRLGAYDCALRKGSKLAAAYGKEFVRERHRHRFEFNSQYREAFEKAGMQCVGENPETGLVEAVEVPACRWFVGVQFHPEYNSTVVNPNPLFMAFIREAIKTRKKDKE</sequence>
<organism>
    <name type="scientific">Porphyromonas gingivalis (strain ATCC 33277 / DSM 20709 / CIP 103683 / JCM 12257 / NCTC 11834 / 2561)</name>
    <dbReference type="NCBI Taxonomy" id="431947"/>
    <lineage>
        <taxon>Bacteria</taxon>
        <taxon>Pseudomonadati</taxon>
        <taxon>Bacteroidota</taxon>
        <taxon>Bacteroidia</taxon>
        <taxon>Bacteroidales</taxon>
        <taxon>Porphyromonadaceae</taxon>
        <taxon>Porphyromonas</taxon>
    </lineage>
</organism>
<feature type="chain" id="PRO_1000139519" description="CTP synthase">
    <location>
        <begin position="1"/>
        <end position="539"/>
    </location>
</feature>
<feature type="domain" description="Glutamine amidotransferase type-1" evidence="1">
    <location>
        <begin position="294"/>
        <end position="536"/>
    </location>
</feature>
<feature type="region of interest" description="Amidoligase domain" evidence="1">
    <location>
        <begin position="1"/>
        <end position="268"/>
    </location>
</feature>
<feature type="active site" description="Nucleophile; for glutamine hydrolysis" evidence="1">
    <location>
        <position position="383"/>
    </location>
</feature>
<feature type="active site" evidence="1">
    <location>
        <position position="509"/>
    </location>
</feature>
<feature type="active site" evidence="1">
    <location>
        <position position="511"/>
    </location>
</feature>
<feature type="binding site" evidence="1">
    <location>
        <position position="15"/>
    </location>
    <ligand>
        <name>CTP</name>
        <dbReference type="ChEBI" id="CHEBI:37563"/>
        <note>allosteric inhibitor</note>
    </ligand>
</feature>
<feature type="binding site" evidence="1">
    <location>
        <position position="15"/>
    </location>
    <ligand>
        <name>UTP</name>
        <dbReference type="ChEBI" id="CHEBI:46398"/>
    </ligand>
</feature>
<feature type="binding site" evidence="1">
    <location>
        <begin position="16"/>
        <end position="21"/>
    </location>
    <ligand>
        <name>ATP</name>
        <dbReference type="ChEBI" id="CHEBI:30616"/>
    </ligand>
</feature>
<feature type="binding site" evidence="1">
    <location>
        <position position="56"/>
    </location>
    <ligand>
        <name>L-glutamine</name>
        <dbReference type="ChEBI" id="CHEBI:58359"/>
    </ligand>
</feature>
<feature type="binding site" evidence="1">
    <location>
        <position position="73"/>
    </location>
    <ligand>
        <name>ATP</name>
        <dbReference type="ChEBI" id="CHEBI:30616"/>
    </ligand>
</feature>
<feature type="binding site" evidence="1">
    <location>
        <position position="73"/>
    </location>
    <ligand>
        <name>Mg(2+)</name>
        <dbReference type="ChEBI" id="CHEBI:18420"/>
    </ligand>
</feature>
<feature type="binding site" evidence="1">
    <location>
        <position position="143"/>
    </location>
    <ligand>
        <name>Mg(2+)</name>
        <dbReference type="ChEBI" id="CHEBI:18420"/>
    </ligand>
</feature>
<feature type="binding site" evidence="1">
    <location>
        <begin position="150"/>
        <end position="152"/>
    </location>
    <ligand>
        <name>CTP</name>
        <dbReference type="ChEBI" id="CHEBI:37563"/>
        <note>allosteric inhibitor</note>
    </ligand>
</feature>
<feature type="binding site" evidence="1">
    <location>
        <begin position="189"/>
        <end position="194"/>
    </location>
    <ligand>
        <name>CTP</name>
        <dbReference type="ChEBI" id="CHEBI:37563"/>
        <note>allosteric inhibitor</note>
    </ligand>
</feature>
<feature type="binding site" evidence="1">
    <location>
        <begin position="189"/>
        <end position="194"/>
    </location>
    <ligand>
        <name>UTP</name>
        <dbReference type="ChEBI" id="CHEBI:46398"/>
    </ligand>
</feature>
<feature type="binding site" evidence="1">
    <location>
        <position position="225"/>
    </location>
    <ligand>
        <name>CTP</name>
        <dbReference type="ChEBI" id="CHEBI:37563"/>
        <note>allosteric inhibitor</note>
    </ligand>
</feature>
<feature type="binding site" evidence="1">
    <location>
        <position position="225"/>
    </location>
    <ligand>
        <name>UTP</name>
        <dbReference type="ChEBI" id="CHEBI:46398"/>
    </ligand>
</feature>
<feature type="binding site" evidence="1">
    <location>
        <position position="356"/>
    </location>
    <ligand>
        <name>L-glutamine</name>
        <dbReference type="ChEBI" id="CHEBI:58359"/>
    </ligand>
</feature>
<feature type="binding site" evidence="1">
    <location>
        <begin position="384"/>
        <end position="387"/>
    </location>
    <ligand>
        <name>L-glutamine</name>
        <dbReference type="ChEBI" id="CHEBI:58359"/>
    </ligand>
</feature>
<feature type="binding site" evidence="1">
    <location>
        <position position="407"/>
    </location>
    <ligand>
        <name>L-glutamine</name>
        <dbReference type="ChEBI" id="CHEBI:58359"/>
    </ligand>
</feature>
<feature type="binding site" evidence="1">
    <location>
        <position position="464"/>
    </location>
    <ligand>
        <name>L-glutamine</name>
        <dbReference type="ChEBI" id="CHEBI:58359"/>
    </ligand>
</feature>
<evidence type="ECO:0000255" key="1">
    <source>
        <dbReference type="HAMAP-Rule" id="MF_01227"/>
    </source>
</evidence>
<proteinExistence type="inferred from homology"/>
<reference key="1">
    <citation type="journal article" date="2008" name="DNA Res.">
        <title>Determination of the genome sequence of Porphyromonas gingivalis strain ATCC 33277 and genomic comparison with strain W83 revealed extensive genome rearrangements in P. gingivalis.</title>
        <authorList>
            <person name="Naito M."/>
            <person name="Hirakawa H."/>
            <person name="Yamashita A."/>
            <person name="Ohara N."/>
            <person name="Shoji M."/>
            <person name="Yukitake H."/>
            <person name="Nakayama K."/>
            <person name="Toh H."/>
            <person name="Yoshimura F."/>
            <person name="Kuhara S."/>
            <person name="Hattori M."/>
            <person name="Hayashi T."/>
            <person name="Nakayama K."/>
        </authorList>
    </citation>
    <scope>NUCLEOTIDE SEQUENCE [LARGE SCALE GENOMIC DNA]</scope>
    <source>
        <strain>ATCC 33277 / DSM 20709 / CIP 103683 / JCM 12257 / NCTC 11834 / 2561</strain>
    </source>
</reference>
<protein>
    <recommendedName>
        <fullName evidence="1">CTP synthase</fullName>
        <ecNumber evidence="1">6.3.4.2</ecNumber>
    </recommendedName>
    <alternativeName>
        <fullName evidence="1">Cytidine 5'-triphosphate synthase</fullName>
    </alternativeName>
    <alternativeName>
        <fullName evidence="1">Cytidine triphosphate synthetase</fullName>
        <shortName evidence="1">CTP synthetase</shortName>
        <shortName evidence="1">CTPS</shortName>
    </alternativeName>
    <alternativeName>
        <fullName evidence="1">UTP--ammonia ligase</fullName>
    </alternativeName>
</protein>
<comment type="function">
    <text evidence="1">Catalyzes the ATP-dependent amination of UTP to CTP with either L-glutamine or ammonia as the source of nitrogen. Regulates intracellular CTP levels through interactions with the four ribonucleotide triphosphates.</text>
</comment>
<comment type="catalytic activity">
    <reaction evidence="1">
        <text>UTP + L-glutamine + ATP + H2O = CTP + L-glutamate + ADP + phosphate + 2 H(+)</text>
        <dbReference type="Rhea" id="RHEA:26426"/>
        <dbReference type="ChEBI" id="CHEBI:15377"/>
        <dbReference type="ChEBI" id="CHEBI:15378"/>
        <dbReference type="ChEBI" id="CHEBI:29985"/>
        <dbReference type="ChEBI" id="CHEBI:30616"/>
        <dbReference type="ChEBI" id="CHEBI:37563"/>
        <dbReference type="ChEBI" id="CHEBI:43474"/>
        <dbReference type="ChEBI" id="CHEBI:46398"/>
        <dbReference type="ChEBI" id="CHEBI:58359"/>
        <dbReference type="ChEBI" id="CHEBI:456216"/>
        <dbReference type="EC" id="6.3.4.2"/>
    </reaction>
</comment>
<comment type="catalytic activity">
    <reaction evidence="1">
        <text>L-glutamine + H2O = L-glutamate + NH4(+)</text>
        <dbReference type="Rhea" id="RHEA:15889"/>
        <dbReference type="ChEBI" id="CHEBI:15377"/>
        <dbReference type="ChEBI" id="CHEBI:28938"/>
        <dbReference type="ChEBI" id="CHEBI:29985"/>
        <dbReference type="ChEBI" id="CHEBI:58359"/>
    </reaction>
</comment>
<comment type="catalytic activity">
    <reaction evidence="1">
        <text>UTP + NH4(+) + ATP = CTP + ADP + phosphate + 2 H(+)</text>
        <dbReference type="Rhea" id="RHEA:16597"/>
        <dbReference type="ChEBI" id="CHEBI:15378"/>
        <dbReference type="ChEBI" id="CHEBI:28938"/>
        <dbReference type="ChEBI" id="CHEBI:30616"/>
        <dbReference type="ChEBI" id="CHEBI:37563"/>
        <dbReference type="ChEBI" id="CHEBI:43474"/>
        <dbReference type="ChEBI" id="CHEBI:46398"/>
        <dbReference type="ChEBI" id="CHEBI:456216"/>
    </reaction>
</comment>
<comment type="activity regulation">
    <text evidence="1">Allosterically activated by GTP, when glutamine is the substrate; GTP has no effect on the reaction when ammonia is the substrate. The allosteric effector GTP functions by stabilizing the protein conformation that binds the tetrahedral intermediate(s) formed during glutamine hydrolysis. Inhibited by the product CTP, via allosteric rather than competitive inhibition.</text>
</comment>
<comment type="pathway">
    <text evidence="1">Pyrimidine metabolism; CTP biosynthesis via de novo pathway; CTP from UDP: step 2/2.</text>
</comment>
<comment type="subunit">
    <text evidence="1">Homotetramer.</text>
</comment>
<comment type="miscellaneous">
    <text evidence="1">CTPSs have evolved a hybrid strategy for distinguishing between UTP and CTP. The overlapping regions of the product feedback inhibitory and substrate sites recognize a common feature in both compounds, the triphosphate moiety. To differentiate isosteric substrate and product pyrimidine rings, an additional pocket far from the expected kinase/ligase catalytic site, specifically recognizes the cytosine and ribose portions of the product inhibitor.</text>
</comment>
<comment type="similarity">
    <text evidence="1">Belongs to the CTP synthase family.</text>
</comment>
<dbReference type="EC" id="6.3.4.2" evidence="1"/>
<dbReference type="EMBL" id="AP009380">
    <property type="protein sequence ID" value="BAG33966.1"/>
    <property type="molecule type" value="Genomic_DNA"/>
</dbReference>
<dbReference type="RefSeq" id="WP_012458277.1">
    <property type="nucleotide sequence ID" value="NZ_CP025930.1"/>
</dbReference>
<dbReference type="SMR" id="B2RKS1"/>
<dbReference type="MEROPS" id="C26.964"/>
<dbReference type="GeneID" id="29256632"/>
<dbReference type="KEGG" id="pgn:PGN_1447"/>
<dbReference type="eggNOG" id="COG0504">
    <property type="taxonomic scope" value="Bacteria"/>
</dbReference>
<dbReference type="HOGENOM" id="CLU_011675_5_0_10"/>
<dbReference type="OrthoDB" id="9801107at2"/>
<dbReference type="BioCyc" id="PGIN431947:G1G2V-1649-MONOMER"/>
<dbReference type="UniPathway" id="UPA00159">
    <property type="reaction ID" value="UER00277"/>
</dbReference>
<dbReference type="Proteomes" id="UP000008842">
    <property type="component" value="Chromosome"/>
</dbReference>
<dbReference type="GO" id="GO:0005829">
    <property type="term" value="C:cytosol"/>
    <property type="evidence" value="ECO:0007669"/>
    <property type="project" value="TreeGrafter"/>
</dbReference>
<dbReference type="GO" id="GO:0005524">
    <property type="term" value="F:ATP binding"/>
    <property type="evidence" value="ECO:0007669"/>
    <property type="project" value="UniProtKB-KW"/>
</dbReference>
<dbReference type="GO" id="GO:0003883">
    <property type="term" value="F:CTP synthase activity"/>
    <property type="evidence" value="ECO:0007669"/>
    <property type="project" value="UniProtKB-UniRule"/>
</dbReference>
<dbReference type="GO" id="GO:0004359">
    <property type="term" value="F:glutaminase activity"/>
    <property type="evidence" value="ECO:0007669"/>
    <property type="project" value="RHEA"/>
</dbReference>
<dbReference type="GO" id="GO:0042802">
    <property type="term" value="F:identical protein binding"/>
    <property type="evidence" value="ECO:0007669"/>
    <property type="project" value="TreeGrafter"/>
</dbReference>
<dbReference type="GO" id="GO:0046872">
    <property type="term" value="F:metal ion binding"/>
    <property type="evidence" value="ECO:0007669"/>
    <property type="project" value="UniProtKB-KW"/>
</dbReference>
<dbReference type="GO" id="GO:0044210">
    <property type="term" value="P:'de novo' CTP biosynthetic process"/>
    <property type="evidence" value="ECO:0007669"/>
    <property type="project" value="UniProtKB-UniRule"/>
</dbReference>
<dbReference type="GO" id="GO:0019856">
    <property type="term" value="P:pyrimidine nucleobase biosynthetic process"/>
    <property type="evidence" value="ECO:0007669"/>
    <property type="project" value="TreeGrafter"/>
</dbReference>
<dbReference type="CDD" id="cd03113">
    <property type="entry name" value="CTPS_N"/>
    <property type="match status" value="1"/>
</dbReference>
<dbReference type="CDD" id="cd01746">
    <property type="entry name" value="GATase1_CTP_Synthase"/>
    <property type="match status" value="1"/>
</dbReference>
<dbReference type="FunFam" id="3.40.50.300:FF:000009">
    <property type="entry name" value="CTP synthase"/>
    <property type="match status" value="1"/>
</dbReference>
<dbReference type="FunFam" id="3.40.50.880:FF:000002">
    <property type="entry name" value="CTP synthase"/>
    <property type="match status" value="1"/>
</dbReference>
<dbReference type="Gene3D" id="3.40.50.880">
    <property type="match status" value="1"/>
</dbReference>
<dbReference type="Gene3D" id="3.40.50.300">
    <property type="entry name" value="P-loop containing nucleotide triphosphate hydrolases"/>
    <property type="match status" value="1"/>
</dbReference>
<dbReference type="HAMAP" id="MF_01227">
    <property type="entry name" value="PyrG"/>
    <property type="match status" value="1"/>
</dbReference>
<dbReference type="InterPro" id="IPR029062">
    <property type="entry name" value="Class_I_gatase-like"/>
</dbReference>
<dbReference type="InterPro" id="IPR004468">
    <property type="entry name" value="CTP_synthase"/>
</dbReference>
<dbReference type="InterPro" id="IPR017456">
    <property type="entry name" value="CTP_synthase_N"/>
</dbReference>
<dbReference type="InterPro" id="IPR017926">
    <property type="entry name" value="GATASE"/>
</dbReference>
<dbReference type="InterPro" id="IPR033828">
    <property type="entry name" value="GATase1_CTP_Synthase"/>
</dbReference>
<dbReference type="InterPro" id="IPR027417">
    <property type="entry name" value="P-loop_NTPase"/>
</dbReference>
<dbReference type="NCBIfam" id="NF003792">
    <property type="entry name" value="PRK05380.1"/>
    <property type="match status" value="1"/>
</dbReference>
<dbReference type="NCBIfam" id="TIGR00337">
    <property type="entry name" value="PyrG"/>
    <property type="match status" value="1"/>
</dbReference>
<dbReference type="PANTHER" id="PTHR11550">
    <property type="entry name" value="CTP SYNTHASE"/>
    <property type="match status" value="1"/>
</dbReference>
<dbReference type="PANTHER" id="PTHR11550:SF0">
    <property type="entry name" value="CTP SYNTHASE-RELATED"/>
    <property type="match status" value="1"/>
</dbReference>
<dbReference type="Pfam" id="PF06418">
    <property type="entry name" value="CTP_synth_N"/>
    <property type="match status" value="1"/>
</dbReference>
<dbReference type="Pfam" id="PF00117">
    <property type="entry name" value="GATase"/>
    <property type="match status" value="1"/>
</dbReference>
<dbReference type="SUPFAM" id="SSF52317">
    <property type="entry name" value="Class I glutamine amidotransferase-like"/>
    <property type="match status" value="1"/>
</dbReference>
<dbReference type="SUPFAM" id="SSF52540">
    <property type="entry name" value="P-loop containing nucleoside triphosphate hydrolases"/>
    <property type="match status" value="1"/>
</dbReference>
<dbReference type="PROSITE" id="PS51273">
    <property type="entry name" value="GATASE_TYPE_1"/>
    <property type="match status" value="1"/>
</dbReference>
<keyword id="KW-0067">ATP-binding</keyword>
<keyword id="KW-0315">Glutamine amidotransferase</keyword>
<keyword id="KW-0436">Ligase</keyword>
<keyword id="KW-0460">Magnesium</keyword>
<keyword id="KW-0479">Metal-binding</keyword>
<keyword id="KW-0547">Nucleotide-binding</keyword>
<keyword id="KW-0665">Pyrimidine biosynthesis</keyword>
<gene>
    <name evidence="1" type="primary">pyrG</name>
    <name type="ordered locus">PGN_1447</name>
</gene>
<accession>B2RKS1</accession>
<name>PYRG_PORG3</name>